<sequence>MSSATVAASRRQSCYLCDLPRMPWAMIWDFTEPVCRGCVNYEGADRIEFVIETARHLKRAHGFQEGRSPGPSPSSSSSSSSSSSVKPQLSAKEMAQIGHTMGGPEGVTRTSQQPPPPQCLDRYSLERPPPPRLGSEYGVGRQVNGILLPNGFPKPEEPPELNRQSPNPRRTSSVPQSLGALMNGAPIGSGRTPVGLSAASLVAAAAATTSADLSGKRPGSVSSSEHDGKEKHRADSYSELGENHKSRAEEWISKPKTVRDTLMAMQHSHSPFDSKFKKDPGPGRVLSFEANNPASKSGARGGRKRKPSPEPEGEGGSVKMNGEGQPWLPAAESLKISTMASPSFISPPSTVSPHSNRTTPPEAAQNGQSPMAALILVADNAGGNHASKDANQVHSTTRRNSSSPPSPSSMNQRRMAPRDVPSQIPSGGTSSHAGMEQGHPQSIPDSSIPNSIPLCCTLCHERLEDTHFVQCPSVPSHKFCFPCSRQSIKQQGSSGEVYCPSGEKCPLVGSNVPWAFMQGEIATILAGDVKVKKERDS</sequence>
<organism>
    <name type="scientific">Xenopus tropicalis</name>
    <name type="common">Western clawed frog</name>
    <name type="synonym">Silurana tropicalis</name>
    <dbReference type="NCBI Taxonomy" id="8364"/>
    <lineage>
        <taxon>Eukaryota</taxon>
        <taxon>Metazoa</taxon>
        <taxon>Chordata</taxon>
        <taxon>Craniata</taxon>
        <taxon>Vertebrata</taxon>
        <taxon>Euteleostomi</taxon>
        <taxon>Amphibia</taxon>
        <taxon>Batrachia</taxon>
        <taxon>Anura</taxon>
        <taxon>Pipoidea</taxon>
        <taxon>Pipidae</taxon>
        <taxon>Xenopodinae</taxon>
        <taxon>Xenopus</taxon>
        <taxon>Silurana</taxon>
    </lineage>
</organism>
<name>I2BP2_XENTR</name>
<accession>Q6DIH5</accession>
<accession>Q6P3P8</accession>
<evidence type="ECO:0000250" key="1"/>
<evidence type="ECO:0000256" key="2">
    <source>
        <dbReference type="SAM" id="MobiDB-lite"/>
    </source>
</evidence>
<evidence type="ECO:0000305" key="3"/>
<keyword id="KW-0479">Metal-binding</keyword>
<keyword id="KW-0539">Nucleus</keyword>
<keyword id="KW-1185">Reference proteome</keyword>
<keyword id="KW-0678">Repressor</keyword>
<keyword id="KW-0804">Transcription</keyword>
<keyword id="KW-0805">Transcription regulation</keyword>
<keyword id="KW-0862">Zinc</keyword>
<keyword id="KW-0863">Zinc-finger</keyword>
<gene>
    <name type="primary">irf2bp2</name>
</gene>
<comment type="function">
    <text evidence="1">Acts as a transcriptional repressor.</text>
</comment>
<comment type="subcellular location">
    <subcellularLocation>
        <location evidence="1">Nucleus</location>
    </subcellularLocation>
</comment>
<comment type="similarity">
    <text evidence="3">Belongs to the IRF2BP family.</text>
</comment>
<comment type="sequence caution" evidence="3">
    <conflict type="erroneous initiation">
        <sequence resource="EMBL-CDS" id="AAH63909"/>
    </conflict>
</comment>
<dbReference type="EMBL" id="BC075565">
    <property type="protein sequence ID" value="AAH75565.1"/>
    <property type="molecule type" value="mRNA"/>
</dbReference>
<dbReference type="EMBL" id="BC063909">
    <property type="protein sequence ID" value="AAH63909.1"/>
    <property type="status" value="ALT_INIT"/>
    <property type="molecule type" value="mRNA"/>
</dbReference>
<dbReference type="RefSeq" id="NP_001001988.1">
    <property type="nucleotide sequence ID" value="NM_001001988.1"/>
</dbReference>
<dbReference type="SMR" id="Q6DIH5"/>
<dbReference type="FunCoup" id="Q6DIH5">
    <property type="interactions" value="3104"/>
</dbReference>
<dbReference type="STRING" id="8364.ENSXETP00000045964"/>
<dbReference type="PaxDb" id="8364-ENSXETP00000053106"/>
<dbReference type="DNASU" id="394851"/>
<dbReference type="GeneID" id="394851"/>
<dbReference type="KEGG" id="xtr:394851"/>
<dbReference type="AGR" id="Xenbase:XB-GENE-1015579"/>
<dbReference type="CTD" id="359948"/>
<dbReference type="eggNOG" id="KOG3579">
    <property type="taxonomic scope" value="Eukaryota"/>
</dbReference>
<dbReference type="HOGENOM" id="CLU_019307_2_0_1"/>
<dbReference type="InParanoid" id="Q6DIH5"/>
<dbReference type="OMA" id="FKKEPGM"/>
<dbReference type="OrthoDB" id="10065080at2759"/>
<dbReference type="PhylomeDB" id="Q6DIH5"/>
<dbReference type="TreeFam" id="TF317075"/>
<dbReference type="Proteomes" id="UP000008143">
    <property type="component" value="Chromosome 5"/>
</dbReference>
<dbReference type="Bgee" id="ENSXETG00000024649">
    <property type="expression patterns" value="Expressed in early embryo and 21 other cell types or tissues"/>
</dbReference>
<dbReference type="GO" id="GO:0005634">
    <property type="term" value="C:nucleus"/>
    <property type="evidence" value="ECO:0007669"/>
    <property type="project" value="UniProtKB-SubCell"/>
</dbReference>
<dbReference type="GO" id="GO:0008270">
    <property type="term" value="F:zinc ion binding"/>
    <property type="evidence" value="ECO:0007669"/>
    <property type="project" value="UniProtKB-KW"/>
</dbReference>
<dbReference type="FunFam" id="1.10.10.1580:FF:000001">
    <property type="entry name" value="interferon regulatory factor 2-binding protein 2"/>
    <property type="match status" value="1"/>
</dbReference>
<dbReference type="Gene3D" id="1.10.10.1580">
    <property type="entry name" value="Interferon regulatory factor 2-binding protein"/>
    <property type="match status" value="1"/>
</dbReference>
<dbReference type="InterPro" id="IPR044882">
    <property type="entry name" value="I2BP1/2_C3HC4-RING_sf"/>
</dbReference>
<dbReference type="InterPro" id="IPR022750">
    <property type="entry name" value="Interferon_reg_fac2-bd1_2_Znf"/>
</dbReference>
<dbReference type="PANTHER" id="PTHR10816:SF18">
    <property type="entry name" value="INTERFERON REGULATORY FACTOR 2-BINDING PROTEIN 2"/>
    <property type="match status" value="1"/>
</dbReference>
<dbReference type="PANTHER" id="PTHR10816">
    <property type="entry name" value="MYELIN TRANSCRIPTION FACTOR 1-RELATED"/>
    <property type="match status" value="1"/>
</dbReference>
<dbReference type="Pfam" id="PF11261">
    <property type="entry name" value="IRF-2BP1_2"/>
    <property type="match status" value="1"/>
</dbReference>
<dbReference type="Pfam" id="PF25457">
    <property type="entry name" value="IRF-2BP1_2_M"/>
    <property type="match status" value="1"/>
</dbReference>
<dbReference type="Pfam" id="PF25454">
    <property type="entry name" value="zf-C3HC4_IRF-2BP1_2"/>
    <property type="match status" value="1"/>
</dbReference>
<dbReference type="SUPFAM" id="SSF57850">
    <property type="entry name" value="RING/U-box"/>
    <property type="match status" value="1"/>
</dbReference>
<protein>
    <recommendedName>
        <fullName>Interferon regulatory factor 2-binding protein 2</fullName>
        <shortName>IRF-2-binding protein 2</shortName>
        <shortName>IRF-2BP2</shortName>
    </recommendedName>
</protein>
<proteinExistence type="evidence at transcript level"/>
<feature type="chain" id="PRO_0000328738" description="Interferon regulatory factor 2-binding protein 2">
    <location>
        <begin position="1"/>
        <end position="537"/>
    </location>
</feature>
<feature type="zinc finger region" description="RING-type; degenerate">
    <location>
        <begin position="456"/>
        <end position="503"/>
    </location>
</feature>
<feature type="region of interest" description="Disordered" evidence="2">
    <location>
        <begin position="60"/>
        <end position="186"/>
    </location>
</feature>
<feature type="region of interest" description="Disordered" evidence="2">
    <location>
        <begin position="208"/>
        <end position="366"/>
    </location>
</feature>
<feature type="region of interest" description="Disordered" evidence="2">
    <location>
        <begin position="382"/>
        <end position="446"/>
    </location>
</feature>
<feature type="region of interest" description="Cys-rich">
    <location>
        <begin position="456"/>
        <end position="503"/>
    </location>
</feature>
<feature type="compositionally biased region" description="Low complexity" evidence="2">
    <location>
        <begin position="73"/>
        <end position="84"/>
    </location>
</feature>
<feature type="compositionally biased region" description="Polar residues" evidence="2">
    <location>
        <begin position="162"/>
        <end position="176"/>
    </location>
</feature>
<feature type="compositionally biased region" description="Basic and acidic residues" evidence="2">
    <location>
        <begin position="224"/>
        <end position="259"/>
    </location>
</feature>
<feature type="compositionally biased region" description="Basic and acidic residues" evidence="2">
    <location>
        <begin position="270"/>
        <end position="281"/>
    </location>
</feature>
<feature type="compositionally biased region" description="Polar residues" evidence="2">
    <location>
        <begin position="335"/>
        <end position="366"/>
    </location>
</feature>
<feature type="compositionally biased region" description="Polar residues" evidence="2">
    <location>
        <begin position="389"/>
        <end position="400"/>
    </location>
</feature>
<feature type="compositionally biased region" description="Polar residues" evidence="2">
    <location>
        <begin position="423"/>
        <end position="432"/>
    </location>
</feature>
<reference key="1">
    <citation type="submission" date="2004-06" db="EMBL/GenBank/DDBJ databases">
        <authorList>
            <consortium name="NIH - Xenopus Gene Collection (XGC) project"/>
        </authorList>
    </citation>
    <scope>NUCLEOTIDE SEQUENCE [LARGE SCALE MRNA]</scope>
    <source>
        <tissue>Embryo</tissue>
    </source>
</reference>